<proteinExistence type="inferred from homology"/>
<comment type="function">
    <text evidence="1">Catalyzes the reduction of the glycolytic intermediate dihydroxyacetone phosphate (DHAP) to sn-glycerol 3-phosphate (G3P), the key precursor for phospholipid synthesis.</text>
</comment>
<comment type="catalytic activity">
    <reaction evidence="1">
        <text>sn-glycerol 3-phosphate + NAD(+) = dihydroxyacetone phosphate + NADH + H(+)</text>
        <dbReference type="Rhea" id="RHEA:11092"/>
        <dbReference type="ChEBI" id="CHEBI:15378"/>
        <dbReference type="ChEBI" id="CHEBI:57540"/>
        <dbReference type="ChEBI" id="CHEBI:57597"/>
        <dbReference type="ChEBI" id="CHEBI:57642"/>
        <dbReference type="ChEBI" id="CHEBI:57945"/>
        <dbReference type="EC" id="1.1.1.94"/>
    </reaction>
    <physiologicalReaction direction="right-to-left" evidence="1">
        <dbReference type="Rhea" id="RHEA:11094"/>
    </physiologicalReaction>
</comment>
<comment type="catalytic activity">
    <reaction evidence="1">
        <text>sn-glycerol 3-phosphate + NADP(+) = dihydroxyacetone phosphate + NADPH + H(+)</text>
        <dbReference type="Rhea" id="RHEA:11096"/>
        <dbReference type="ChEBI" id="CHEBI:15378"/>
        <dbReference type="ChEBI" id="CHEBI:57597"/>
        <dbReference type="ChEBI" id="CHEBI:57642"/>
        <dbReference type="ChEBI" id="CHEBI:57783"/>
        <dbReference type="ChEBI" id="CHEBI:58349"/>
        <dbReference type="EC" id="1.1.1.94"/>
    </reaction>
    <physiologicalReaction direction="right-to-left" evidence="1">
        <dbReference type="Rhea" id="RHEA:11098"/>
    </physiologicalReaction>
</comment>
<comment type="pathway">
    <text evidence="1">Membrane lipid metabolism; glycerophospholipid metabolism.</text>
</comment>
<comment type="subcellular location">
    <subcellularLocation>
        <location evidence="1">Cytoplasm</location>
    </subcellularLocation>
</comment>
<comment type="similarity">
    <text evidence="1">Belongs to the NAD-dependent glycerol-3-phosphate dehydrogenase family.</text>
</comment>
<keyword id="KW-0963">Cytoplasm</keyword>
<keyword id="KW-0444">Lipid biosynthesis</keyword>
<keyword id="KW-0443">Lipid metabolism</keyword>
<keyword id="KW-0520">NAD</keyword>
<keyword id="KW-0521">NADP</keyword>
<keyword id="KW-0547">Nucleotide-binding</keyword>
<keyword id="KW-0560">Oxidoreductase</keyword>
<keyword id="KW-0594">Phospholipid biosynthesis</keyword>
<keyword id="KW-1208">Phospholipid metabolism</keyword>
<evidence type="ECO:0000255" key="1">
    <source>
        <dbReference type="HAMAP-Rule" id="MF_00394"/>
    </source>
</evidence>
<accession>C1CAR8</accession>
<sequence length="338" mass="36777">MEKQTVAVLGPGSWGTALSQVLNDNGHEVRIWGNLPEQINEINTHHTNKHYFKDVVLDENIIAYTDLAETLKDVDAILFVVPTKVTRLVAQQVAQTLDHKVIIMHASKGLEPDSHKRLSTILEEEIPEHLRSDIVVVSGPSHAEETIVRDLTLITAASKDLQTAQYVQKLFSNHYFRLYTNTDVIGVETAGALKNIIAVGAGALHGLGFGDNAKAAIIARGLAEITRLGVALGASPLTYSGLSGVGDLIVTGTSIHSRNWRAGDALGRGESLADIEANMGMVIEGISTTRAAYELAQELGVYMPITQAIYQVIYHGTNIKDAIYDIMNNEFKAENEWS</sequence>
<name>GPDA_STRP7</name>
<feature type="chain" id="PRO_1000190173" description="Glycerol-3-phosphate dehydrogenase [NAD(P)+]">
    <location>
        <begin position="1"/>
        <end position="338"/>
    </location>
</feature>
<feature type="active site" description="Proton acceptor" evidence="1">
    <location>
        <position position="194"/>
    </location>
</feature>
<feature type="binding site" evidence="1">
    <location>
        <position position="13"/>
    </location>
    <ligand>
        <name>NADPH</name>
        <dbReference type="ChEBI" id="CHEBI:57783"/>
    </ligand>
</feature>
<feature type="binding site" evidence="1">
    <location>
        <position position="14"/>
    </location>
    <ligand>
        <name>NADPH</name>
        <dbReference type="ChEBI" id="CHEBI:57783"/>
    </ligand>
</feature>
<feature type="binding site" evidence="1">
    <location>
        <position position="108"/>
    </location>
    <ligand>
        <name>NADPH</name>
        <dbReference type="ChEBI" id="CHEBI:57783"/>
    </ligand>
</feature>
<feature type="binding site" evidence="1">
    <location>
        <position position="108"/>
    </location>
    <ligand>
        <name>sn-glycerol 3-phosphate</name>
        <dbReference type="ChEBI" id="CHEBI:57597"/>
    </ligand>
</feature>
<feature type="binding site" evidence="1">
    <location>
        <position position="139"/>
    </location>
    <ligand>
        <name>sn-glycerol 3-phosphate</name>
        <dbReference type="ChEBI" id="CHEBI:57597"/>
    </ligand>
</feature>
<feature type="binding site" evidence="1">
    <location>
        <position position="141"/>
    </location>
    <ligand>
        <name>sn-glycerol 3-phosphate</name>
        <dbReference type="ChEBI" id="CHEBI:57597"/>
    </ligand>
</feature>
<feature type="binding site" evidence="1">
    <location>
        <position position="143"/>
    </location>
    <ligand>
        <name>NADPH</name>
        <dbReference type="ChEBI" id="CHEBI:57783"/>
    </ligand>
</feature>
<feature type="binding site" evidence="1">
    <location>
        <position position="194"/>
    </location>
    <ligand>
        <name>sn-glycerol 3-phosphate</name>
        <dbReference type="ChEBI" id="CHEBI:57597"/>
    </ligand>
</feature>
<feature type="binding site" evidence="1">
    <location>
        <position position="247"/>
    </location>
    <ligand>
        <name>sn-glycerol 3-phosphate</name>
        <dbReference type="ChEBI" id="CHEBI:57597"/>
    </ligand>
</feature>
<feature type="binding site" evidence="1">
    <location>
        <position position="257"/>
    </location>
    <ligand>
        <name>sn-glycerol 3-phosphate</name>
        <dbReference type="ChEBI" id="CHEBI:57597"/>
    </ligand>
</feature>
<feature type="binding site" evidence="1">
    <location>
        <position position="258"/>
    </location>
    <ligand>
        <name>NADPH</name>
        <dbReference type="ChEBI" id="CHEBI:57783"/>
    </ligand>
</feature>
<feature type="binding site" evidence="1">
    <location>
        <position position="258"/>
    </location>
    <ligand>
        <name>sn-glycerol 3-phosphate</name>
        <dbReference type="ChEBI" id="CHEBI:57597"/>
    </ligand>
</feature>
<feature type="binding site" evidence="1">
    <location>
        <position position="259"/>
    </location>
    <ligand>
        <name>sn-glycerol 3-phosphate</name>
        <dbReference type="ChEBI" id="CHEBI:57597"/>
    </ligand>
</feature>
<feature type="binding site" evidence="1">
    <location>
        <position position="282"/>
    </location>
    <ligand>
        <name>NADPH</name>
        <dbReference type="ChEBI" id="CHEBI:57783"/>
    </ligand>
</feature>
<feature type="binding site" evidence="1">
    <location>
        <position position="284"/>
    </location>
    <ligand>
        <name>NADPH</name>
        <dbReference type="ChEBI" id="CHEBI:57783"/>
    </ligand>
</feature>
<reference key="1">
    <citation type="journal article" date="2010" name="Genome Biol.">
        <title>Structure and dynamics of the pan-genome of Streptococcus pneumoniae and closely related species.</title>
        <authorList>
            <person name="Donati C."/>
            <person name="Hiller N.L."/>
            <person name="Tettelin H."/>
            <person name="Muzzi A."/>
            <person name="Croucher N.J."/>
            <person name="Angiuoli S.V."/>
            <person name="Oggioni M."/>
            <person name="Dunning Hotopp J.C."/>
            <person name="Hu F.Z."/>
            <person name="Riley D.R."/>
            <person name="Covacci A."/>
            <person name="Mitchell T.J."/>
            <person name="Bentley S.D."/>
            <person name="Kilian M."/>
            <person name="Ehrlich G.D."/>
            <person name="Rappuoli R."/>
            <person name="Moxon E.R."/>
            <person name="Masignani V."/>
        </authorList>
    </citation>
    <scope>NUCLEOTIDE SEQUENCE [LARGE SCALE GENOMIC DNA]</scope>
    <source>
        <strain>70585</strain>
    </source>
</reference>
<gene>
    <name evidence="1" type="primary">gpsA</name>
    <name type="ordered locus">SP70585_2197</name>
</gene>
<dbReference type="EC" id="1.1.1.94" evidence="1"/>
<dbReference type="EMBL" id="CP000918">
    <property type="protein sequence ID" value="ACO16089.1"/>
    <property type="molecule type" value="Genomic_DNA"/>
</dbReference>
<dbReference type="RefSeq" id="WP_000415103.1">
    <property type="nucleotide sequence ID" value="NC_012468.1"/>
</dbReference>
<dbReference type="SMR" id="C1CAR8"/>
<dbReference type="KEGG" id="snm:SP70585_2197"/>
<dbReference type="HOGENOM" id="CLU_033449_0_2_9"/>
<dbReference type="UniPathway" id="UPA00940"/>
<dbReference type="Proteomes" id="UP000002211">
    <property type="component" value="Chromosome"/>
</dbReference>
<dbReference type="GO" id="GO:0005829">
    <property type="term" value="C:cytosol"/>
    <property type="evidence" value="ECO:0007669"/>
    <property type="project" value="TreeGrafter"/>
</dbReference>
<dbReference type="GO" id="GO:0047952">
    <property type="term" value="F:glycerol-3-phosphate dehydrogenase [NAD(P)+] activity"/>
    <property type="evidence" value="ECO:0007669"/>
    <property type="project" value="UniProtKB-UniRule"/>
</dbReference>
<dbReference type="GO" id="GO:0051287">
    <property type="term" value="F:NAD binding"/>
    <property type="evidence" value="ECO:0007669"/>
    <property type="project" value="InterPro"/>
</dbReference>
<dbReference type="GO" id="GO:0005975">
    <property type="term" value="P:carbohydrate metabolic process"/>
    <property type="evidence" value="ECO:0007669"/>
    <property type="project" value="InterPro"/>
</dbReference>
<dbReference type="GO" id="GO:0046167">
    <property type="term" value="P:glycerol-3-phosphate biosynthetic process"/>
    <property type="evidence" value="ECO:0007669"/>
    <property type="project" value="UniProtKB-UniRule"/>
</dbReference>
<dbReference type="GO" id="GO:0046168">
    <property type="term" value="P:glycerol-3-phosphate catabolic process"/>
    <property type="evidence" value="ECO:0007669"/>
    <property type="project" value="InterPro"/>
</dbReference>
<dbReference type="GO" id="GO:0006650">
    <property type="term" value="P:glycerophospholipid metabolic process"/>
    <property type="evidence" value="ECO:0007669"/>
    <property type="project" value="UniProtKB-UniRule"/>
</dbReference>
<dbReference type="GO" id="GO:0008654">
    <property type="term" value="P:phospholipid biosynthetic process"/>
    <property type="evidence" value="ECO:0007669"/>
    <property type="project" value="UniProtKB-KW"/>
</dbReference>
<dbReference type="FunFam" id="1.10.1040.10:FF:000001">
    <property type="entry name" value="Glycerol-3-phosphate dehydrogenase [NAD(P)+]"/>
    <property type="match status" value="1"/>
</dbReference>
<dbReference type="FunFam" id="3.40.50.720:FF:000019">
    <property type="entry name" value="Glycerol-3-phosphate dehydrogenase [NAD(P)+]"/>
    <property type="match status" value="1"/>
</dbReference>
<dbReference type="Gene3D" id="1.10.1040.10">
    <property type="entry name" value="N-(1-d-carboxylethyl)-l-norvaline Dehydrogenase, domain 2"/>
    <property type="match status" value="1"/>
</dbReference>
<dbReference type="Gene3D" id="3.40.50.720">
    <property type="entry name" value="NAD(P)-binding Rossmann-like Domain"/>
    <property type="match status" value="1"/>
</dbReference>
<dbReference type="HAMAP" id="MF_00394">
    <property type="entry name" value="NAD_Glyc3P_dehydrog"/>
    <property type="match status" value="1"/>
</dbReference>
<dbReference type="InterPro" id="IPR008927">
    <property type="entry name" value="6-PGluconate_DH-like_C_sf"/>
</dbReference>
<dbReference type="InterPro" id="IPR013328">
    <property type="entry name" value="6PGD_dom2"/>
</dbReference>
<dbReference type="InterPro" id="IPR006168">
    <property type="entry name" value="G3P_DH_NAD-dep"/>
</dbReference>
<dbReference type="InterPro" id="IPR006109">
    <property type="entry name" value="G3P_DH_NAD-dep_C"/>
</dbReference>
<dbReference type="InterPro" id="IPR011128">
    <property type="entry name" value="G3P_DH_NAD-dep_N"/>
</dbReference>
<dbReference type="InterPro" id="IPR036291">
    <property type="entry name" value="NAD(P)-bd_dom_sf"/>
</dbReference>
<dbReference type="NCBIfam" id="NF000940">
    <property type="entry name" value="PRK00094.1-2"/>
    <property type="match status" value="1"/>
</dbReference>
<dbReference type="NCBIfam" id="NF000941">
    <property type="entry name" value="PRK00094.1-3"/>
    <property type="match status" value="1"/>
</dbReference>
<dbReference type="NCBIfam" id="NF000942">
    <property type="entry name" value="PRK00094.1-4"/>
    <property type="match status" value="1"/>
</dbReference>
<dbReference type="PANTHER" id="PTHR11728">
    <property type="entry name" value="GLYCEROL-3-PHOSPHATE DEHYDROGENASE"/>
    <property type="match status" value="1"/>
</dbReference>
<dbReference type="PANTHER" id="PTHR11728:SF1">
    <property type="entry name" value="GLYCEROL-3-PHOSPHATE DEHYDROGENASE [NAD(+)] 2, CHLOROPLASTIC"/>
    <property type="match status" value="1"/>
</dbReference>
<dbReference type="Pfam" id="PF07479">
    <property type="entry name" value="NAD_Gly3P_dh_C"/>
    <property type="match status" value="1"/>
</dbReference>
<dbReference type="Pfam" id="PF01210">
    <property type="entry name" value="NAD_Gly3P_dh_N"/>
    <property type="match status" value="1"/>
</dbReference>
<dbReference type="PIRSF" id="PIRSF000114">
    <property type="entry name" value="Glycerol-3-P_dh"/>
    <property type="match status" value="1"/>
</dbReference>
<dbReference type="PRINTS" id="PR00077">
    <property type="entry name" value="GPDHDRGNASE"/>
</dbReference>
<dbReference type="SUPFAM" id="SSF48179">
    <property type="entry name" value="6-phosphogluconate dehydrogenase C-terminal domain-like"/>
    <property type="match status" value="1"/>
</dbReference>
<dbReference type="SUPFAM" id="SSF51735">
    <property type="entry name" value="NAD(P)-binding Rossmann-fold domains"/>
    <property type="match status" value="1"/>
</dbReference>
<dbReference type="PROSITE" id="PS00957">
    <property type="entry name" value="NAD_G3PDH"/>
    <property type="match status" value="1"/>
</dbReference>
<protein>
    <recommendedName>
        <fullName evidence="1">Glycerol-3-phosphate dehydrogenase [NAD(P)+]</fullName>
        <ecNumber evidence="1">1.1.1.94</ecNumber>
    </recommendedName>
    <alternativeName>
        <fullName evidence="1">NAD(P)(+)-dependent glycerol-3-phosphate dehydrogenase</fullName>
    </alternativeName>
    <alternativeName>
        <fullName evidence="1">NAD(P)H-dependent dihydroxyacetone-phosphate reductase</fullName>
    </alternativeName>
</protein>
<organism>
    <name type="scientific">Streptococcus pneumoniae (strain 70585)</name>
    <dbReference type="NCBI Taxonomy" id="488221"/>
    <lineage>
        <taxon>Bacteria</taxon>
        <taxon>Bacillati</taxon>
        <taxon>Bacillota</taxon>
        <taxon>Bacilli</taxon>
        <taxon>Lactobacillales</taxon>
        <taxon>Streptococcaceae</taxon>
        <taxon>Streptococcus</taxon>
    </lineage>
</organism>